<protein>
    <recommendedName>
        <fullName evidence="1">D-aminoacyl-tRNA deacylase</fullName>
        <shortName evidence="1">DTD</shortName>
        <ecNumber evidence="1">3.1.1.96</ecNumber>
    </recommendedName>
    <alternativeName>
        <fullName evidence="2">D-tyrosyl-tRNA(Tyr) deacylase</fullName>
    </alternativeName>
    <alternativeName>
        <fullName evidence="1">Gly-tRNA(Ala) deacylase</fullName>
    </alternativeName>
</protein>
<dbReference type="EC" id="3.1.1.96" evidence="1"/>
<dbReference type="EMBL" id="AE000657">
    <property type="protein sequence ID" value="AAC06704.1"/>
    <property type="molecule type" value="Genomic_DNA"/>
</dbReference>
<dbReference type="PIR" id="B70339">
    <property type="entry name" value="B70339"/>
</dbReference>
<dbReference type="RefSeq" id="NP_213302.1">
    <property type="nucleotide sequence ID" value="NC_000918.1"/>
</dbReference>
<dbReference type="RefSeq" id="WP_010880240.1">
    <property type="nucleotide sequence ID" value="NC_000918.1"/>
</dbReference>
<dbReference type="PDB" id="2DBO">
    <property type="method" value="X-ray"/>
    <property type="resolution" value="2.76 A"/>
    <property type="chains" value="A=1-148"/>
</dbReference>
<dbReference type="PDBsum" id="2DBO"/>
<dbReference type="SMR" id="O66742"/>
<dbReference type="FunCoup" id="O66742">
    <property type="interactions" value="372"/>
</dbReference>
<dbReference type="STRING" id="224324.aq_428"/>
<dbReference type="EnsemblBacteria" id="AAC06704">
    <property type="protein sequence ID" value="AAC06704"/>
    <property type="gene ID" value="aq_428"/>
</dbReference>
<dbReference type="KEGG" id="aae:aq_428"/>
<dbReference type="PATRIC" id="fig|224324.8.peg.353"/>
<dbReference type="eggNOG" id="COG1490">
    <property type="taxonomic scope" value="Bacteria"/>
</dbReference>
<dbReference type="HOGENOM" id="CLU_076901_1_0_0"/>
<dbReference type="InParanoid" id="O66742"/>
<dbReference type="OrthoDB" id="9801395at2"/>
<dbReference type="EvolutionaryTrace" id="O66742"/>
<dbReference type="Proteomes" id="UP000000798">
    <property type="component" value="Chromosome"/>
</dbReference>
<dbReference type="GO" id="GO:0005737">
    <property type="term" value="C:cytoplasm"/>
    <property type="evidence" value="ECO:0000318"/>
    <property type="project" value="GO_Central"/>
</dbReference>
<dbReference type="GO" id="GO:0051500">
    <property type="term" value="F:D-tyrosyl-tRNA(Tyr) deacylase activity"/>
    <property type="evidence" value="ECO:0000318"/>
    <property type="project" value="GO_Central"/>
</dbReference>
<dbReference type="GO" id="GO:0106026">
    <property type="term" value="F:Gly-tRNA(Ala) deacylase activity"/>
    <property type="evidence" value="ECO:0007669"/>
    <property type="project" value="UniProtKB-UniRule"/>
</dbReference>
<dbReference type="GO" id="GO:0043908">
    <property type="term" value="F:Ser(Gly)-tRNA(Ala) hydrolase activity"/>
    <property type="evidence" value="ECO:0007669"/>
    <property type="project" value="UniProtKB-UniRule"/>
</dbReference>
<dbReference type="GO" id="GO:0000049">
    <property type="term" value="F:tRNA binding"/>
    <property type="evidence" value="ECO:0007669"/>
    <property type="project" value="UniProtKB-UniRule"/>
</dbReference>
<dbReference type="GO" id="GO:0019478">
    <property type="term" value="P:D-amino acid catabolic process"/>
    <property type="evidence" value="ECO:0007669"/>
    <property type="project" value="UniProtKB-UniRule"/>
</dbReference>
<dbReference type="GO" id="GO:0006399">
    <property type="term" value="P:tRNA metabolic process"/>
    <property type="evidence" value="ECO:0000318"/>
    <property type="project" value="GO_Central"/>
</dbReference>
<dbReference type="CDD" id="cd00563">
    <property type="entry name" value="Dtyr_deacylase"/>
    <property type="match status" value="1"/>
</dbReference>
<dbReference type="FunFam" id="3.50.80.10:FF:000001">
    <property type="entry name" value="D-aminoacyl-tRNA deacylase"/>
    <property type="match status" value="1"/>
</dbReference>
<dbReference type="Gene3D" id="3.50.80.10">
    <property type="entry name" value="D-tyrosyl-tRNA(Tyr) deacylase"/>
    <property type="match status" value="1"/>
</dbReference>
<dbReference type="HAMAP" id="MF_00518">
    <property type="entry name" value="Deacylase_Dtd"/>
    <property type="match status" value="1"/>
</dbReference>
<dbReference type="InterPro" id="IPR003732">
    <property type="entry name" value="Daa-tRNA_deacyls_DTD"/>
</dbReference>
<dbReference type="InterPro" id="IPR023509">
    <property type="entry name" value="DTD-like_sf"/>
</dbReference>
<dbReference type="NCBIfam" id="TIGR00256">
    <property type="entry name" value="D-aminoacyl-tRNA deacylase"/>
    <property type="match status" value="1"/>
</dbReference>
<dbReference type="PANTHER" id="PTHR10472:SF5">
    <property type="entry name" value="D-AMINOACYL-TRNA DEACYLASE 1"/>
    <property type="match status" value="1"/>
</dbReference>
<dbReference type="PANTHER" id="PTHR10472">
    <property type="entry name" value="D-TYROSYL-TRNA TYR DEACYLASE"/>
    <property type="match status" value="1"/>
</dbReference>
<dbReference type="Pfam" id="PF02580">
    <property type="entry name" value="Tyr_Deacylase"/>
    <property type="match status" value="1"/>
</dbReference>
<dbReference type="SUPFAM" id="SSF69500">
    <property type="entry name" value="DTD-like"/>
    <property type="match status" value="1"/>
</dbReference>
<organism>
    <name type="scientific">Aquifex aeolicus (strain VF5)</name>
    <dbReference type="NCBI Taxonomy" id="224324"/>
    <lineage>
        <taxon>Bacteria</taxon>
        <taxon>Pseudomonadati</taxon>
        <taxon>Aquificota</taxon>
        <taxon>Aquificia</taxon>
        <taxon>Aquificales</taxon>
        <taxon>Aquificaceae</taxon>
        <taxon>Aquifex</taxon>
    </lineage>
</organism>
<keyword id="KW-0002">3D-structure</keyword>
<keyword id="KW-0963">Cytoplasm</keyword>
<keyword id="KW-0378">Hydrolase</keyword>
<keyword id="KW-1185">Reference proteome</keyword>
<keyword id="KW-0694">RNA-binding</keyword>
<keyword id="KW-0820">tRNA-binding</keyword>
<feature type="chain" id="PRO_0000164513" description="D-aminoacyl-tRNA deacylase">
    <location>
        <begin position="1"/>
        <end position="148"/>
    </location>
</feature>
<feature type="short sequence motif" description="Gly-cisPro motif, important for rejection of L-amino acids" evidence="1">
    <location>
        <begin position="137"/>
        <end position="138"/>
    </location>
</feature>
<feature type="strand" evidence="3">
    <location>
        <begin position="2"/>
        <end position="15"/>
    </location>
</feature>
<feature type="strand" evidence="3">
    <location>
        <begin position="18"/>
        <end position="32"/>
    </location>
</feature>
<feature type="helix" evidence="3">
    <location>
        <begin position="39"/>
        <end position="51"/>
    </location>
</feature>
<feature type="turn" evidence="3">
    <location>
        <begin position="66"/>
        <end position="70"/>
    </location>
</feature>
<feature type="strand" evidence="3">
    <location>
        <begin position="72"/>
        <end position="77"/>
    </location>
</feature>
<feature type="helix" evidence="3">
    <location>
        <begin position="79"/>
        <end position="82"/>
    </location>
</feature>
<feature type="strand" evidence="3">
    <location>
        <begin position="86"/>
        <end position="90"/>
    </location>
</feature>
<feature type="helix" evidence="3">
    <location>
        <begin position="99"/>
        <end position="114"/>
    </location>
</feature>
<feature type="strand" evidence="3">
    <location>
        <begin position="120"/>
        <end position="122"/>
    </location>
</feature>
<feature type="strand" evidence="3">
    <location>
        <begin position="125"/>
        <end position="127"/>
    </location>
</feature>
<feature type="strand" evidence="3">
    <location>
        <begin position="130"/>
        <end position="144"/>
    </location>
</feature>
<feature type="helix" evidence="3">
    <location>
        <begin position="145"/>
        <end position="147"/>
    </location>
</feature>
<name>DTD_AQUAE</name>
<evidence type="ECO:0000255" key="1">
    <source>
        <dbReference type="HAMAP-Rule" id="MF_00518"/>
    </source>
</evidence>
<evidence type="ECO:0000305" key="2"/>
<evidence type="ECO:0007829" key="3">
    <source>
        <dbReference type="PDB" id="2DBO"/>
    </source>
</evidence>
<sequence>MRAVIQRVKKSWVEVDGKVVGSINEGLNVFLGVRKGDTEEDIEKLVNKILNLRIFEDERGKFQYSVLDIKGEILVVSQFTLYANVKKGRRPSFEEAEEPKRAKELYEKFVDKIKESGLKVETGIFGAMMDVFIENWGPVTIIIDSREI</sequence>
<accession>O66742</accession>
<gene>
    <name evidence="1" type="primary">dtd</name>
    <name type="ordered locus">aq_428</name>
</gene>
<reference key="1">
    <citation type="journal article" date="1998" name="Nature">
        <title>The complete genome of the hyperthermophilic bacterium Aquifex aeolicus.</title>
        <authorList>
            <person name="Deckert G."/>
            <person name="Warren P.V."/>
            <person name="Gaasterland T."/>
            <person name="Young W.G."/>
            <person name="Lenox A.L."/>
            <person name="Graham D.E."/>
            <person name="Overbeek R."/>
            <person name="Snead M.A."/>
            <person name="Keller M."/>
            <person name="Aujay M."/>
            <person name="Huber R."/>
            <person name="Feldman R.A."/>
            <person name="Short J.M."/>
            <person name="Olsen G.J."/>
            <person name="Swanson R.V."/>
        </authorList>
    </citation>
    <scope>NUCLEOTIDE SEQUENCE [LARGE SCALE GENOMIC DNA]</scope>
    <source>
        <strain>VF5</strain>
    </source>
</reference>
<reference key="2">
    <citation type="submission" date="2006-06" db="PDB data bank">
        <title>Crystal structure of D-Tyr-tRNA(tyr) deacylase from Aquifex aeolicus.</title>
        <authorList>
            <consortium name="RIKEN structural genomics initiative (RSGI)"/>
        </authorList>
    </citation>
    <scope>X-RAY CRYSTALLOGRAPHY (2.76 ANGSTROMS)</scope>
</reference>
<comment type="function">
    <text evidence="1">An aminoacyl-tRNA editing enzyme that deacylates mischarged D-aminoacyl-tRNAs. Also deacylates mischarged glycyl-tRNA(Ala), protecting cells against glycine mischarging by AlaRS. Acts via tRNA-based rather than protein-based catalysis; rejects L-amino acids rather than detecting D-amino acids in the active site. By recycling D-aminoacyl-tRNA to D-amino acids and free tRNA molecules, this enzyme counteracts the toxicity associated with the formation of D-aminoacyl-tRNA entities in vivo and helps enforce protein L-homochirality.</text>
</comment>
<comment type="catalytic activity">
    <reaction evidence="1">
        <text>glycyl-tRNA(Ala) + H2O = tRNA(Ala) + glycine + H(+)</text>
        <dbReference type="Rhea" id="RHEA:53744"/>
        <dbReference type="Rhea" id="RHEA-COMP:9657"/>
        <dbReference type="Rhea" id="RHEA-COMP:13640"/>
        <dbReference type="ChEBI" id="CHEBI:15377"/>
        <dbReference type="ChEBI" id="CHEBI:15378"/>
        <dbReference type="ChEBI" id="CHEBI:57305"/>
        <dbReference type="ChEBI" id="CHEBI:78442"/>
        <dbReference type="ChEBI" id="CHEBI:78522"/>
        <dbReference type="EC" id="3.1.1.96"/>
    </reaction>
</comment>
<comment type="catalytic activity">
    <reaction evidence="1">
        <text>a D-aminoacyl-tRNA + H2O = a tRNA + a D-alpha-amino acid + H(+)</text>
        <dbReference type="Rhea" id="RHEA:13953"/>
        <dbReference type="Rhea" id="RHEA-COMP:10123"/>
        <dbReference type="Rhea" id="RHEA-COMP:10124"/>
        <dbReference type="ChEBI" id="CHEBI:15377"/>
        <dbReference type="ChEBI" id="CHEBI:15378"/>
        <dbReference type="ChEBI" id="CHEBI:59871"/>
        <dbReference type="ChEBI" id="CHEBI:78442"/>
        <dbReference type="ChEBI" id="CHEBI:79333"/>
        <dbReference type="EC" id="3.1.1.96"/>
    </reaction>
</comment>
<comment type="subunit">
    <text evidence="1">Homodimer.</text>
</comment>
<comment type="subcellular location">
    <subcellularLocation>
        <location evidence="1">Cytoplasm</location>
    </subcellularLocation>
</comment>
<comment type="domain">
    <text evidence="1">A Gly-cisPro motif from one monomer fits into the active site of the other monomer to allow specific chiral rejection of L-amino acids.</text>
</comment>
<comment type="similarity">
    <text evidence="1">Belongs to the DTD family.</text>
</comment>
<proteinExistence type="evidence at protein level"/>